<gene>
    <name type="primary">rps2</name>
</gene>
<accession>Q6EW59</accession>
<name>RR2_NYMAL</name>
<keyword id="KW-0150">Chloroplast</keyword>
<keyword id="KW-0934">Plastid</keyword>
<keyword id="KW-0687">Ribonucleoprotein</keyword>
<keyword id="KW-0689">Ribosomal protein</keyword>
<comment type="subcellular location">
    <subcellularLocation>
        <location>Plastid</location>
        <location>Chloroplast</location>
    </subcellularLocation>
</comment>
<comment type="similarity">
    <text evidence="1">Belongs to the universal ribosomal protein uS2 family.</text>
</comment>
<organism>
    <name type="scientific">Nymphaea alba</name>
    <name type="common">White water-lily</name>
    <name type="synonym">Castalia alba</name>
    <dbReference type="NCBI Taxonomy" id="34301"/>
    <lineage>
        <taxon>Eukaryota</taxon>
        <taxon>Viridiplantae</taxon>
        <taxon>Streptophyta</taxon>
        <taxon>Embryophyta</taxon>
        <taxon>Tracheophyta</taxon>
        <taxon>Spermatophyta</taxon>
        <taxon>Magnoliopsida</taxon>
        <taxon>Nymphaeales</taxon>
        <taxon>Nymphaeaceae</taxon>
        <taxon>Nymphaea</taxon>
    </lineage>
</organism>
<evidence type="ECO:0000305" key="1"/>
<geneLocation type="chloroplast"/>
<protein>
    <recommendedName>
        <fullName evidence="1">Small ribosomal subunit protein uS2c</fullName>
    </recommendedName>
    <alternativeName>
        <fullName>30S ribosomal protein S2, chloroplastic</fullName>
    </alternativeName>
</protein>
<reference key="1">
    <citation type="journal article" date="2004" name="Mol. Biol. Evol.">
        <title>The chloroplast genome of Nymphaea alba: whole-genome analyses and the problem of identifying the most basal angiosperm.</title>
        <authorList>
            <person name="Goremykin V.V."/>
            <person name="Hirsch-Ernst K.I."/>
            <person name="Woelfl S."/>
            <person name="Hellwig F.H."/>
        </authorList>
    </citation>
    <scope>NUCLEOTIDE SEQUENCE [LARGE SCALE GENOMIC DNA]</scope>
</reference>
<sequence>MTRRYWNINLEEMMEAGVHFGHGTRKWDPRMAPYISAKRKGIHITNLTRTARFLSEACDLVFDAASRGKHFLIVGTKDKAADSVASAAIRARCHYVNKKWLGGMSTNWSTTETRLQKFRDLRVRAEMGQFSRLPKRDAAILKRQLSHFQTYLGGIKYMTGLPDIVIIIDQQEEYTALRECVTLGIPTICLIDTNCDPDLADIPIPANDDAIASIRLILNKLVSAICQGRSSYIRSR</sequence>
<dbReference type="EMBL" id="AJ627251">
    <property type="protein sequence ID" value="CAF28582.1"/>
    <property type="molecule type" value="Genomic_DNA"/>
</dbReference>
<dbReference type="RefSeq" id="YP_053144.1">
    <property type="nucleotide sequence ID" value="NC_006050.1"/>
</dbReference>
<dbReference type="SMR" id="Q6EW59"/>
<dbReference type="GeneID" id="2896207"/>
<dbReference type="GO" id="GO:0009507">
    <property type="term" value="C:chloroplast"/>
    <property type="evidence" value="ECO:0007669"/>
    <property type="project" value="UniProtKB-SubCell"/>
</dbReference>
<dbReference type="GO" id="GO:0005763">
    <property type="term" value="C:mitochondrial small ribosomal subunit"/>
    <property type="evidence" value="ECO:0007669"/>
    <property type="project" value="TreeGrafter"/>
</dbReference>
<dbReference type="GO" id="GO:0003735">
    <property type="term" value="F:structural constituent of ribosome"/>
    <property type="evidence" value="ECO:0007669"/>
    <property type="project" value="InterPro"/>
</dbReference>
<dbReference type="GO" id="GO:0006412">
    <property type="term" value="P:translation"/>
    <property type="evidence" value="ECO:0007669"/>
    <property type="project" value="UniProtKB-UniRule"/>
</dbReference>
<dbReference type="CDD" id="cd01425">
    <property type="entry name" value="RPS2"/>
    <property type="match status" value="1"/>
</dbReference>
<dbReference type="FunFam" id="3.40.50.10490:FF:000101">
    <property type="match status" value="1"/>
</dbReference>
<dbReference type="FunFam" id="1.10.287.610:FF:000001">
    <property type="entry name" value="30S ribosomal protein S2"/>
    <property type="match status" value="1"/>
</dbReference>
<dbReference type="Gene3D" id="3.40.50.10490">
    <property type="entry name" value="Glucose-6-phosphate isomerase like protein, domain 1"/>
    <property type="match status" value="1"/>
</dbReference>
<dbReference type="Gene3D" id="1.10.287.610">
    <property type="entry name" value="Helix hairpin bin"/>
    <property type="match status" value="1"/>
</dbReference>
<dbReference type="HAMAP" id="MF_00291_B">
    <property type="entry name" value="Ribosomal_uS2_B"/>
    <property type="match status" value="1"/>
</dbReference>
<dbReference type="InterPro" id="IPR001865">
    <property type="entry name" value="Ribosomal_uS2"/>
</dbReference>
<dbReference type="InterPro" id="IPR005706">
    <property type="entry name" value="Ribosomal_uS2_bac/mit/plastid"/>
</dbReference>
<dbReference type="InterPro" id="IPR018130">
    <property type="entry name" value="Ribosomal_uS2_CS"/>
</dbReference>
<dbReference type="InterPro" id="IPR023591">
    <property type="entry name" value="Ribosomal_uS2_flav_dom_sf"/>
</dbReference>
<dbReference type="NCBIfam" id="TIGR01011">
    <property type="entry name" value="rpsB_bact"/>
    <property type="match status" value="1"/>
</dbReference>
<dbReference type="PANTHER" id="PTHR12534">
    <property type="entry name" value="30S RIBOSOMAL PROTEIN S2 PROKARYOTIC AND ORGANELLAR"/>
    <property type="match status" value="1"/>
</dbReference>
<dbReference type="PANTHER" id="PTHR12534:SF0">
    <property type="entry name" value="SMALL RIBOSOMAL SUBUNIT PROTEIN US2M"/>
    <property type="match status" value="1"/>
</dbReference>
<dbReference type="Pfam" id="PF00318">
    <property type="entry name" value="Ribosomal_S2"/>
    <property type="match status" value="1"/>
</dbReference>
<dbReference type="PRINTS" id="PR00395">
    <property type="entry name" value="RIBOSOMALS2"/>
</dbReference>
<dbReference type="SUPFAM" id="SSF52313">
    <property type="entry name" value="Ribosomal protein S2"/>
    <property type="match status" value="1"/>
</dbReference>
<dbReference type="PROSITE" id="PS00962">
    <property type="entry name" value="RIBOSOMAL_S2_1"/>
    <property type="match status" value="1"/>
</dbReference>
<dbReference type="PROSITE" id="PS00963">
    <property type="entry name" value="RIBOSOMAL_S2_2"/>
    <property type="match status" value="1"/>
</dbReference>
<feature type="chain" id="PRO_0000352137" description="Small ribosomal subunit protein uS2c">
    <location>
        <begin position="1"/>
        <end position="236"/>
    </location>
</feature>
<proteinExistence type="inferred from homology"/>